<reference key="1">
    <citation type="journal article" date="2007" name="Genome Biol.">
        <title>Characterization and modeling of the Haemophilus influenzae core and supragenomes based on the complete genomic sequences of Rd and 12 clinical nontypeable strains.</title>
        <authorList>
            <person name="Hogg J.S."/>
            <person name="Hu F.Z."/>
            <person name="Janto B."/>
            <person name="Boissy R."/>
            <person name="Hayes J."/>
            <person name="Keefe R."/>
            <person name="Post J.C."/>
            <person name="Ehrlich G.D."/>
        </authorList>
    </citation>
    <scope>NUCLEOTIDE SEQUENCE [LARGE SCALE GENOMIC DNA]</scope>
    <source>
        <strain>PittEE</strain>
    </source>
</reference>
<sequence length="354" mass="38133">MATQEEKQKALAAALGQIEKQFGKGSIMKLGDTKTLDVESISTGSLGLDVALGIGGLPMGRIVEIFGPESSGKTTLTLSVIAQAQKAGKTCAFIDAEHALDPIYAAKLGVDVKELFVSQPDNGEQALEICDALVRSGAIDVIIVDSVAALTPKAEIEGDMGDSHMGLQARLMSQALRKLTGQIKNANCLVVFINQIRMKIGVMFGNPETTTGGNALKFYSSVRLDIRRTGSVKDGENIIGNETRVKVVKNKLAAPFRQVDFQILYGEGISKAGELLELGVKHKLVEKSGAWYSYNGEKIGQGKANSMKWLNENIEKSDELEARLRAELVANPEQALMADIEQSENNTESESDFE</sequence>
<keyword id="KW-0067">ATP-binding</keyword>
<keyword id="KW-0963">Cytoplasm</keyword>
<keyword id="KW-0227">DNA damage</keyword>
<keyword id="KW-0233">DNA recombination</keyword>
<keyword id="KW-0234">DNA repair</keyword>
<keyword id="KW-0238">DNA-binding</keyword>
<keyword id="KW-0547">Nucleotide-binding</keyword>
<keyword id="KW-0742">SOS response</keyword>
<protein>
    <recommendedName>
        <fullName evidence="1">Protein RecA</fullName>
    </recommendedName>
    <alternativeName>
        <fullName evidence="1">Recombinase A</fullName>
    </alternativeName>
</protein>
<proteinExistence type="inferred from homology"/>
<gene>
    <name evidence="1" type="primary">recA</name>
    <name type="ordered locus">CGSHiEE_09155</name>
</gene>
<dbReference type="EMBL" id="CP000671">
    <property type="protein sequence ID" value="ABQ99122.1"/>
    <property type="molecule type" value="Genomic_DNA"/>
</dbReference>
<dbReference type="SMR" id="A5UEC1"/>
<dbReference type="KEGG" id="hip:CGSHiEE_09155"/>
<dbReference type="HOGENOM" id="CLU_040469_3_2_6"/>
<dbReference type="GO" id="GO:0005829">
    <property type="term" value="C:cytosol"/>
    <property type="evidence" value="ECO:0007669"/>
    <property type="project" value="TreeGrafter"/>
</dbReference>
<dbReference type="GO" id="GO:0005524">
    <property type="term" value="F:ATP binding"/>
    <property type="evidence" value="ECO:0007669"/>
    <property type="project" value="UniProtKB-UniRule"/>
</dbReference>
<dbReference type="GO" id="GO:0016887">
    <property type="term" value="F:ATP hydrolysis activity"/>
    <property type="evidence" value="ECO:0007669"/>
    <property type="project" value="InterPro"/>
</dbReference>
<dbReference type="GO" id="GO:0140664">
    <property type="term" value="F:ATP-dependent DNA damage sensor activity"/>
    <property type="evidence" value="ECO:0007669"/>
    <property type="project" value="InterPro"/>
</dbReference>
<dbReference type="GO" id="GO:0003684">
    <property type="term" value="F:damaged DNA binding"/>
    <property type="evidence" value="ECO:0007669"/>
    <property type="project" value="UniProtKB-UniRule"/>
</dbReference>
<dbReference type="GO" id="GO:0003697">
    <property type="term" value="F:single-stranded DNA binding"/>
    <property type="evidence" value="ECO:0007669"/>
    <property type="project" value="UniProtKB-UniRule"/>
</dbReference>
<dbReference type="GO" id="GO:0006310">
    <property type="term" value="P:DNA recombination"/>
    <property type="evidence" value="ECO:0007669"/>
    <property type="project" value="UniProtKB-UniRule"/>
</dbReference>
<dbReference type="GO" id="GO:0006281">
    <property type="term" value="P:DNA repair"/>
    <property type="evidence" value="ECO:0007669"/>
    <property type="project" value="UniProtKB-UniRule"/>
</dbReference>
<dbReference type="GO" id="GO:0009432">
    <property type="term" value="P:SOS response"/>
    <property type="evidence" value="ECO:0007669"/>
    <property type="project" value="UniProtKB-UniRule"/>
</dbReference>
<dbReference type="CDD" id="cd00983">
    <property type="entry name" value="RecA"/>
    <property type="match status" value="1"/>
</dbReference>
<dbReference type="FunFam" id="3.40.50.300:FF:000087">
    <property type="entry name" value="Recombinase RecA"/>
    <property type="match status" value="1"/>
</dbReference>
<dbReference type="Gene3D" id="3.40.50.300">
    <property type="entry name" value="P-loop containing nucleotide triphosphate hydrolases"/>
    <property type="match status" value="1"/>
</dbReference>
<dbReference type="HAMAP" id="MF_00268">
    <property type="entry name" value="RecA"/>
    <property type="match status" value="1"/>
</dbReference>
<dbReference type="InterPro" id="IPR003593">
    <property type="entry name" value="AAA+_ATPase"/>
</dbReference>
<dbReference type="InterPro" id="IPR013765">
    <property type="entry name" value="DNA_recomb/repair_RecA"/>
</dbReference>
<dbReference type="InterPro" id="IPR020584">
    <property type="entry name" value="DNA_recomb/repair_RecA_CS"/>
</dbReference>
<dbReference type="InterPro" id="IPR027417">
    <property type="entry name" value="P-loop_NTPase"/>
</dbReference>
<dbReference type="InterPro" id="IPR049261">
    <property type="entry name" value="RecA-like_C"/>
</dbReference>
<dbReference type="InterPro" id="IPR049428">
    <property type="entry name" value="RecA-like_N"/>
</dbReference>
<dbReference type="InterPro" id="IPR020588">
    <property type="entry name" value="RecA_ATP-bd"/>
</dbReference>
<dbReference type="InterPro" id="IPR023400">
    <property type="entry name" value="RecA_C_sf"/>
</dbReference>
<dbReference type="InterPro" id="IPR020587">
    <property type="entry name" value="RecA_monomer-monomer_interface"/>
</dbReference>
<dbReference type="NCBIfam" id="TIGR02012">
    <property type="entry name" value="tigrfam_recA"/>
    <property type="match status" value="1"/>
</dbReference>
<dbReference type="PANTHER" id="PTHR45900:SF1">
    <property type="entry name" value="MITOCHONDRIAL DNA REPAIR PROTEIN RECA HOMOLOG-RELATED"/>
    <property type="match status" value="1"/>
</dbReference>
<dbReference type="PANTHER" id="PTHR45900">
    <property type="entry name" value="RECA"/>
    <property type="match status" value="1"/>
</dbReference>
<dbReference type="Pfam" id="PF00154">
    <property type="entry name" value="RecA"/>
    <property type="match status" value="1"/>
</dbReference>
<dbReference type="Pfam" id="PF21096">
    <property type="entry name" value="RecA_C"/>
    <property type="match status" value="1"/>
</dbReference>
<dbReference type="PRINTS" id="PR00142">
    <property type="entry name" value="RECA"/>
</dbReference>
<dbReference type="SMART" id="SM00382">
    <property type="entry name" value="AAA"/>
    <property type="match status" value="1"/>
</dbReference>
<dbReference type="SUPFAM" id="SSF52540">
    <property type="entry name" value="P-loop containing nucleoside triphosphate hydrolases"/>
    <property type="match status" value="1"/>
</dbReference>
<dbReference type="SUPFAM" id="SSF54752">
    <property type="entry name" value="RecA protein, C-terminal domain"/>
    <property type="match status" value="1"/>
</dbReference>
<dbReference type="PROSITE" id="PS00321">
    <property type="entry name" value="RECA_1"/>
    <property type="match status" value="1"/>
</dbReference>
<dbReference type="PROSITE" id="PS50162">
    <property type="entry name" value="RECA_2"/>
    <property type="match status" value="1"/>
</dbReference>
<dbReference type="PROSITE" id="PS50163">
    <property type="entry name" value="RECA_3"/>
    <property type="match status" value="1"/>
</dbReference>
<accession>A5UEC1</accession>
<name>RECA_HAEIE</name>
<comment type="function">
    <text evidence="1">Can catalyze the hydrolysis of ATP in the presence of single-stranded DNA, the ATP-dependent uptake of single-stranded DNA by duplex DNA, and the ATP-dependent hybridization of homologous single-stranded DNAs. It interacts with LexA causing its activation and leading to its autocatalytic cleavage.</text>
</comment>
<comment type="subcellular location">
    <subcellularLocation>
        <location evidence="1">Cytoplasm</location>
    </subcellularLocation>
</comment>
<comment type="similarity">
    <text evidence="1">Belongs to the RecA family.</text>
</comment>
<evidence type="ECO:0000255" key="1">
    <source>
        <dbReference type="HAMAP-Rule" id="MF_00268"/>
    </source>
</evidence>
<organism>
    <name type="scientific">Haemophilus influenzae (strain PittEE)</name>
    <dbReference type="NCBI Taxonomy" id="374930"/>
    <lineage>
        <taxon>Bacteria</taxon>
        <taxon>Pseudomonadati</taxon>
        <taxon>Pseudomonadota</taxon>
        <taxon>Gammaproteobacteria</taxon>
        <taxon>Pasteurellales</taxon>
        <taxon>Pasteurellaceae</taxon>
        <taxon>Haemophilus</taxon>
    </lineage>
</organism>
<feature type="chain" id="PRO_1000047926" description="Protein RecA">
    <location>
        <begin position="1"/>
        <end position="354"/>
    </location>
</feature>
<feature type="binding site" evidence="1">
    <location>
        <begin position="67"/>
        <end position="74"/>
    </location>
    <ligand>
        <name>ATP</name>
        <dbReference type="ChEBI" id="CHEBI:30616"/>
    </ligand>
</feature>